<accession>B8IYL6</accession>
<sequence length="208" mass="23960">MAKYTEAKCRMCRREGCKLFLKGDRCFTDKCAYDRRPYAPGQHGRARKKVSEYAVQLREKQKTRRIYGILERQFHGYFVKADMQKGVTGTNLLVILERRLDNVVYRLGFANSRNQARQLVRHGVFTLNGRKVNIPSLQVRLGDTIEVPEKNRKIPVLAEAQEVIARRGCPAWLEADGAAFKGTVKAMPQRDDIQFPVNEQLIVELYSK</sequence>
<dbReference type="EMBL" id="CP001358">
    <property type="protein sequence ID" value="ACL48593.1"/>
    <property type="molecule type" value="Genomic_DNA"/>
</dbReference>
<dbReference type="SMR" id="B8IYL6"/>
<dbReference type="STRING" id="525146.Ddes_0685"/>
<dbReference type="KEGG" id="dds:Ddes_0685"/>
<dbReference type="eggNOG" id="COG0522">
    <property type="taxonomic scope" value="Bacteria"/>
</dbReference>
<dbReference type="HOGENOM" id="CLU_092403_0_2_7"/>
<dbReference type="GO" id="GO:0015935">
    <property type="term" value="C:small ribosomal subunit"/>
    <property type="evidence" value="ECO:0007669"/>
    <property type="project" value="InterPro"/>
</dbReference>
<dbReference type="GO" id="GO:0019843">
    <property type="term" value="F:rRNA binding"/>
    <property type="evidence" value="ECO:0007669"/>
    <property type="project" value="UniProtKB-UniRule"/>
</dbReference>
<dbReference type="GO" id="GO:0003735">
    <property type="term" value="F:structural constituent of ribosome"/>
    <property type="evidence" value="ECO:0007669"/>
    <property type="project" value="InterPro"/>
</dbReference>
<dbReference type="GO" id="GO:0042274">
    <property type="term" value="P:ribosomal small subunit biogenesis"/>
    <property type="evidence" value="ECO:0007669"/>
    <property type="project" value="TreeGrafter"/>
</dbReference>
<dbReference type="GO" id="GO:0006412">
    <property type="term" value="P:translation"/>
    <property type="evidence" value="ECO:0007669"/>
    <property type="project" value="UniProtKB-UniRule"/>
</dbReference>
<dbReference type="CDD" id="cd00165">
    <property type="entry name" value="S4"/>
    <property type="match status" value="1"/>
</dbReference>
<dbReference type="FunFam" id="1.10.1050.10:FF:000001">
    <property type="entry name" value="30S ribosomal protein S4"/>
    <property type="match status" value="1"/>
</dbReference>
<dbReference type="FunFam" id="3.10.290.10:FF:000001">
    <property type="entry name" value="30S ribosomal protein S4"/>
    <property type="match status" value="1"/>
</dbReference>
<dbReference type="Gene3D" id="1.10.1050.10">
    <property type="entry name" value="Ribosomal Protein S4 Delta 41, Chain A, domain 1"/>
    <property type="match status" value="1"/>
</dbReference>
<dbReference type="Gene3D" id="3.10.290.10">
    <property type="entry name" value="RNA-binding S4 domain"/>
    <property type="match status" value="1"/>
</dbReference>
<dbReference type="HAMAP" id="MF_01306_B">
    <property type="entry name" value="Ribosomal_uS4_B"/>
    <property type="match status" value="1"/>
</dbReference>
<dbReference type="InterPro" id="IPR022801">
    <property type="entry name" value="Ribosomal_uS4"/>
</dbReference>
<dbReference type="InterPro" id="IPR005709">
    <property type="entry name" value="Ribosomal_uS4_bac-type"/>
</dbReference>
<dbReference type="InterPro" id="IPR018079">
    <property type="entry name" value="Ribosomal_uS4_CS"/>
</dbReference>
<dbReference type="InterPro" id="IPR001912">
    <property type="entry name" value="Ribosomal_uS4_N"/>
</dbReference>
<dbReference type="InterPro" id="IPR002942">
    <property type="entry name" value="S4_RNA-bd"/>
</dbReference>
<dbReference type="InterPro" id="IPR036986">
    <property type="entry name" value="S4_RNA-bd_sf"/>
</dbReference>
<dbReference type="NCBIfam" id="NF003717">
    <property type="entry name" value="PRK05327.1"/>
    <property type="match status" value="1"/>
</dbReference>
<dbReference type="NCBIfam" id="TIGR01017">
    <property type="entry name" value="rpsD_bact"/>
    <property type="match status" value="1"/>
</dbReference>
<dbReference type="PANTHER" id="PTHR11831">
    <property type="entry name" value="30S 40S RIBOSOMAL PROTEIN"/>
    <property type="match status" value="1"/>
</dbReference>
<dbReference type="PANTHER" id="PTHR11831:SF4">
    <property type="entry name" value="SMALL RIBOSOMAL SUBUNIT PROTEIN US4M"/>
    <property type="match status" value="1"/>
</dbReference>
<dbReference type="Pfam" id="PF00163">
    <property type="entry name" value="Ribosomal_S4"/>
    <property type="match status" value="1"/>
</dbReference>
<dbReference type="Pfam" id="PF01479">
    <property type="entry name" value="S4"/>
    <property type="match status" value="1"/>
</dbReference>
<dbReference type="SMART" id="SM01390">
    <property type="entry name" value="Ribosomal_S4"/>
    <property type="match status" value="1"/>
</dbReference>
<dbReference type="SMART" id="SM00363">
    <property type="entry name" value="S4"/>
    <property type="match status" value="1"/>
</dbReference>
<dbReference type="SUPFAM" id="SSF55174">
    <property type="entry name" value="Alpha-L RNA-binding motif"/>
    <property type="match status" value="1"/>
</dbReference>
<dbReference type="PROSITE" id="PS00632">
    <property type="entry name" value="RIBOSOMAL_S4"/>
    <property type="match status" value="1"/>
</dbReference>
<dbReference type="PROSITE" id="PS50889">
    <property type="entry name" value="S4"/>
    <property type="match status" value="1"/>
</dbReference>
<reference key="1">
    <citation type="submission" date="2009-01" db="EMBL/GenBank/DDBJ databases">
        <title>Complete sequence of Desulfovibrio desulfuricans subsp. desulfuricans str. ATCC 27774.</title>
        <authorList>
            <consortium name="US DOE Joint Genome Institute"/>
            <person name="Lucas S."/>
            <person name="Copeland A."/>
            <person name="Lapidus A."/>
            <person name="Glavina del Rio T."/>
            <person name="Tice H."/>
            <person name="Bruce D."/>
            <person name="Goodwin L."/>
            <person name="Pitluck S."/>
            <person name="Sims D."/>
            <person name="Lu M."/>
            <person name="Kiss H."/>
            <person name="Meineke L."/>
            <person name="Brettin T."/>
            <person name="Detter J.C."/>
            <person name="Han C."/>
            <person name="Larimer F."/>
            <person name="Land M."/>
            <person name="Hauser L."/>
            <person name="Kyrpides N."/>
            <person name="Ovchinnikova G."/>
            <person name="Hazen T.C."/>
        </authorList>
    </citation>
    <scope>NUCLEOTIDE SEQUENCE [LARGE SCALE GENOMIC DNA]</scope>
    <source>
        <strain>ATCC 27774 / DSM 6949 / MB</strain>
    </source>
</reference>
<proteinExistence type="inferred from homology"/>
<feature type="chain" id="PRO_1000165398" description="Small ribosomal subunit protein uS4">
    <location>
        <begin position="1"/>
        <end position="208"/>
    </location>
</feature>
<feature type="domain" description="S4 RNA-binding" evidence="1">
    <location>
        <begin position="98"/>
        <end position="161"/>
    </location>
</feature>
<evidence type="ECO:0000255" key="1">
    <source>
        <dbReference type="HAMAP-Rule" id="MF_01306"/>
    </source>
</evidence>
<evidence type="ECO:0000305" key="2"/>
<gene>
    <name evidence="1" type="primary">rpsD</name>
    <name type="ordered locus">Ddes_0685</name>
</gene>
<name>RS4_DESDA</name>
<organism>
    <name type="scientific">Desulfovibrio desulfuricans (strain ATCC 27774 / DSM 6949 / MB)</name>
    <dbReference type="NCBI Taxonomy" id="525146"/>
    <lineage>
        <taxon>Bacteria</taxon>
        <taxon>Pseudomonadati</taxon>
        <taxon>Thermodesulfobacteriota</taxon>
        <taxon>Desulfovibrionia</taxon>
        <taxon>Desulfovibrionales</taxon>
        <taxon>Desulfovibrionaceae</taxon>
        <taxon>Desulfovibrio</taxon>
    </lineage>
</organism>
<protein>
    <recommendedName>
        <fullName evidence="1">Small ribosomal subunit protein uS4</fullName>
    </recommendedName>
    <alternativeName>
        <fullName evidence="2">30S ribosomal protein S4</fullName>
    </alternativeName>
</protein>
<keyword id="KW-0687">Ribonucleoprotein</keyword>
<keyword id="KW-0689">Ribosomal protein</keyword>
<keyword id="KW-0694">RNA-binding</keyword>
<keyword id="KW-0699">rRNA-binding</keyword>
<comment type="function">
    <text evidence="1">One of the primary rRNA binding proteins, it binds directly to 16S rRNA where it nucleates assembly of the body of the 30S subunit.</text>
</comment>
<comment type="function">
    <text evidence="1">With S5 and S12 plays an important role in translational accuracy.</text>
</comment>
<comment type="subunit">
    <text evidence="1">Part of the 30S ribosomal subunit. Contacts protein S5. The interaction surface between S4 and S5 is involved in control of translational fidelity.</text>
</comment>
<comment type="similarity">
    <text evidence="1">Belongs to the universal ribosomal protein uS4 family.</text>
</comment>